<proteinExistence type="inferred from homology"/>
<gene>
    <name evidence="1" type="primary">rps2</name>
    <name type="ordered locus">Mboo_2215</name>
</gene>
<sequence length="203" mass="22733">MTQVNEMEIELKEPLIPVEEYLAAGVHIGTQQKSEDMKKFIYRVRGDGLYILDIRETDARIKTVAKFLTQYEAPEILVVTSRQYGQYPAKKFADTIGAMSATGRFIPGLLTNPVLDGYIEPKVIVVTDPIGDAQVINEAVQCGIPVVALCDTNNMTKFVDLVIPTNNKGRKALSMIYFLLTREMLRIRGIATSLTQEDFETEI</sequence>
<dbReference type="EMBL" id="CP000780">
    <property type="protein sequence ID" value="ABS56729.1"/>
    <property type="molecule type" value="Genomic_DNA"/>
</dbReference>
<dbReference type="RefSeq" id="WP_012107789.1">
    <property type="nucleotide sequence ID" value="NC_009712.1"/>
</dbReference>
<dbReference type="SMR" id="A7IAG8"/>
<dbReference type="STRING" id="456442.Mboo_2215"/>
<dbReference type="GeneID" id="5410150"/>
<dbReference type="KEGG" id="mbn:Mboo_2215"/>
<dbReference type="eggNOG" id="arCOG04245">
    <property type="taxonomic scope" value="Archaea"/>
</dbReference>
<dbReference type="HOGENOM" id="CLU_058171_3_0_2"/>
<dbReference type="OrthoDB" id="371797at2157"/>
<dbReference type="Proteomes" id="UP000002408">
    <property type="component" value="Chromosome"/>
</dbReference>
<dbReference type="GO" id="GO:0015935">
    <property type="term" value="C:small ribosomal subunit"/>
    <property type="evidence" value="ECO:0007669"/>
    <property type="project" value="InterPro"/>
</dbReference>
<dbReference type="GO" id="GO:0003735">
    <property type="term" value="F:structural constituent of ribosome"/>
    <property type="evidence" value="ECO:0007669"/>
    <property type="project" value="InterPro"/>
</dbReference>
<dbReference type="GO" id="GO:0006412">
    <property type="term" value="P:translation"/>
    <property type="evidence" value="ECO:0007669"/>
    <property type="project" value="UniProtKB-UniRule"/>
</dbReference>
<dbReference type="CDD" id="cd01425">
    <property type="entry name" value="RPS2"/>
    <property type="match status" value="1"/>
</dbReference>
<dbReference type="FunFam" id="3.40.50.10490:FF:000030">
    <property type="entry name" value="30S ribosomal protein S2"/>
    <property type="match status" value="1"/>
</dbReference>
<dbReference type="Gene3D" id="3.40.50.10490">
    <property type="entry name" value="Glucose-6-phosphate isomerase like protein, domain 1"/>
    <property type="match status" value="1"/>
</dbReference>
<dbReference type="HAMAP" id="MF_00291_A">
    <property type="entry name" value="Ribosomal_uS2_A"/>
    <property type="match status" value="1"/>
</dbReference>
<dbReference type="InterPro" id="IPR001865">
    <property type="entry name" value="Ribosomal_uS2"/>
</dbReference>
<dbReference type="InterPro" id="IPR023454">
    <property type="entry name" value="Ribosomal_uS2_arc"/>
</dbReference>
<dbReference type="InterPro" id="IPR018130">
    <property type="entry name" value="Ribosomal_uS2_CS"/>
</dbReference>
<dbReference type="InterPro" id="IPR005707">
    <property type="entry name" value="Ribosomal_uS2_euk/arc"/>
</dbReference>
<dbReference type="InterPro" id="IPR023591">
    <property type="entry name" value="Ribosomal_uS2_flav_dom_sf"/>
</dbReference>
<dbReference type="NCBIfam" id="TIGR01012">
    <property type="entry name" value="uS2_euk_arch"/>
    <property type="match status" value="1"/>
</dbReference>
<dbReference type="PANTHER" id="PTHR11489">
    <property type="entry name" value="40S RIBOSOMAL PROTEIN SA"/>
    <property type="match status" value="1"/>
</dbReference>
<dbReference type="Pfam" id="PF00318">
    <property type="entry name" value="Ribosomal_S2"/>
    <property type="match status" value="2"/>
</dbReference>
<dbReference type="PRINTS" id="PR00395">
    <property type="entry name" value="RIBOSOMALS2"/>
</dbReference>
<dbReference type="SUPFAM" id="SSF52313">
    <property type="entry name" value="Ribosomal protein S2"/>
    <property type="match status" value="1"/>
</dbReference>
<dbReference type="PROSITE" id="PS00962">
    <property type="entry name" value="RIBOSOMAL_S2_1"/>
    <property type="match status" value="1"/>
</dbReference>
<dbReference type="PROSITE" id="PS00963">
    <property type="entry name" value="RIBOSOMAL_S2_2"/>
    <property type="match status" value="1"/>
</dbReference>
<keyword id="KW-1185">Reference proteome</keyword>
<keyword id="KW-0687">Ribonucleoprotein</keyword>
<keyword id="KW-0689">Ribosomal protein</keyword>
<organism>
    <name type="scientific">Methanoregula boonei (strain DSM 21154 / JCM 14090 / 6A8)</name>
    <dbReference type="NCBI Taxonomy" id="456442"/>
    <lineage>
        <taxon>Archaea</taxon>
        <taxon>Methanobacteriati</taxon>
        <taxon>Methanobacteriota</taxon>
        <taxon>Stenosarchaea group</taxon>
        <taxon>Methanomicrobia</taxon>
        <taxon>Methanomicrobiales</taxon>
        <taxon>Methanoregulaceae</taxon>
        <taxon>Methanoregula</taxon>
    </lineage>
</organism>
<comment type="similarity">
    <text evidence="1">Belongs to the universal ribosomal protein uS2 family.</text>
</comment>
<name>RS2_METB6</name>
<feature type="chain" id="PRO_0000352069" description="Small ribosomal subunit protein uS2">
    <location>
        <begin position="1"/>
        <end position="203"/>
    </location>
</feature>
<reference key="1">
    <citation type="journal article" date="2015" name="Microbiology">
        <title>Genome of Methanoregula boonei 6A8 reveals adaptations to oligotrophic peatland environments.</title>
        <authorList>
            <person name="Braeuer S."/>
            <person name="Cadillo-Quiroz H."/>
            <person name="Kyrpides N."/>
            <person name="Woyke T."/>
            <person name="Goodwin L."/>
            <person name="Detter C."/>
            <person name="Podell S."/>
            <person name="Yavitt J.B."/>
            <person name="Zinder S.H."/>
        </authorList>
    </citation>
    <scope>NUCLEOTIDE SEQUENCE [LARGE SCALE GENOMIC DNA]</scope>
    <source>
        <strain>DSM 21154 / JCM 14090 / 6A8</strain>
    </source>
</reference>
<accession>A7IAG8</accession>
<protein>
    <recommendedName>
        <fullName evidence="1">Small ribosomal subunit protein uS2</fullName>
    </recommendedName>
    <alternativeName>
        <fullName evidence="2">30S ribosomal protein S2</fullName>
    </alternativeName>
</protein>
<evidence type="ECO:0000255" key="1">
    <source>
        <dbReference type="HAMAP-Rule" id="MF_00291"/>
    </source>
</evidence>
<evidence type="ECO:0000305" key="2"/>